<feature type="chain" id="PRO_0000088964" description="Actin, larval muscle-type">
    <location>
        <begin position="1"/>
        <end position="378"/>
    </location>
</feature>
<accession>P53467</accession>
<reference key="1">
    <citation type="journal article" date="1996" name="Dev. Biol.">
        <title>Mechanism of an evolutionary change in muscle cell differentiation in ascidians with different modes of development.</title>
        <authorList>
            <person name="Kusakabe T."/>
            <person name="Swalla B.J."/>
            <person name="Satoh N."/>
            <person name="Jeffery W.R."/>
        </authorList>
    </citation>
    <scope>NUCLEOTIDE SEQUENCE [GENOMIC DNA]</scope>
    <source>
        <tissue>Gonad</tissue>
    </source>
</reference>
<sequence length="378" mass="42046">MSSEEEDQTAIVCDNGSGLVKAGFAGDDAPRAVFPSIVGRPRHQGVMVGMGQKDSYVGDEAQSKRGILTLKYPIEHGIITNWDDMEKIWHHTFYNELRIAPEEHPTLLTEAPLNPKANREKMTQIMFETFNVPAMYVAIQAVLSLYASGRTTGIVLDSGDGISHNVPIYEGYALPHAIARMDLAGRDLTEYLTKILTERGYSFVTTAEKEIVRDIKEKLCYVALDFEQEMATAASSTSLEKSYELPDGQVITIGNERFRCPETLFQPSFIGMESAGIHETTYNSIMKCDIDIRKDLYANNVLSGGTTMYPGIADRMQKEITALAPSTMKIKIIAPPERKYSVWIGGSILSSLSTFNQMWITKAEYDEAGPSIVHRKCF</sequence>
<organism>
    <name type="scientific">Molgula oculata</name>
    <name type="common">Sea squirt</name>
    <dbReference type="NCBI Taxonomy" id="27575"/>
    <lineage>
        <taxon>Eukaryota</taxon>
        <taxon>Metazoa</taxon>
        <taxon>Chordata</taxon>
        <taxon>Tunicata</taxon>
        <taxon>Ascidiacea</taxon>
        <taxon>Stolidobranchia</taxon>
        <taxon>Molgulidae</taxon>
        <taxon>Molgula</taxon>
    </lineage>
</organism>
<protein>
    <recommendedName>
        <fullName>Actin, larval muscle-type</fullName>
        <ecNumber evidence="1">3.6.4.-</ecNumber>
    </recommendedName>
    <alternativeName>
        <fullName>A1</fullName>
    </alternativeName>
</protein>
<keyword id="KW-0067">ATP-binding</keyword>
<keyword id="KW-0963">Cytoplasm</keyword>
<keyword id="KW-0206">Cytoskeleton</keyword>
<keyword id="KW-0378">Hydrolase</keyword>
<keyword id="KW-0547">Nucleotide-binding</keyword>
<comment type="function">
    <text>Actins are highly conserved proteins that are involved in various types of cell motility and are ubiquitously expressed in all eukaryotic cells. Multiple isoforms are involved in various cellular functions such as cytoskeleton structure, cell mobility, chromosome movement and muscle contraction.</text>
</comment>
<comment type="catalytic activity">
    <reaction evidence="1">
        <text>ATP + H2O = ADP + phosphate + H(+)</text>
        <dbReference type="Rhea" id="RHEA:13065"/>
        <dbReference type="ChEBI" id="CHEBI:15377"/>
        <dbReference type="ChEBI" id="CHEBI:15378"/>
        <dbReference type="ChEBI" id="CHEBI:30616"/>
        <dbReference type="ChEBI" id="CHEBI:43474"/>
        <dbReference type="ChEBI" id="CHEBI:456216"/>
    </reaction>
</comment>
<comment type="subcellular location">
    <subcellularLocation>
        <location>Cytoplasm</location>
        <location>Cytoskeleton</location>
    </subcellularLocation>
</comment>
<comment type="similarity">
    <text evidence="2">Belongs to the actin family.</text>
</comment>
<dbReference type="EC" id="3.6.4.-" evidence="1"/>
<dbReference type="EMBL" id="D78190">
    <property type="protein sequence ID" value="BAA11264.1"/>
    <property type="molecule type" value="Genomic_DNA"/>
</dbReference>
<dbReference type="SMR" id="P53467"/>
<dbReference type="GO" id="GO:0005737">
    <property type="term" value="C:cytoplasm"/>
    <property type="evidence" value="ECO:0007669"/>
    <property type="project" value="UniProtKB-KW"/>
</dbReference>
<dbReference type="GO" id="GO:0005856">
    <property type="term" value="C:cytoskeleton"/>
    <property type="evidence" value="ECO:0007669"/>
    <property type="project" value="UniProtKB-SubCell"/>
</dbReference>
<dbReference type="GO" id="GO:0005524">
    <property type="term" value="F:ATP binding"/>
    <property type="evidence" value="ECO:0007669"/>
    <property type="project" value="UniProtKB-KW"/>
</dbReference>
<dbReference type="GO" id="GO:0016787">
    <property type="term" value="F:hydrolase activity"/>
    <property type="evidence" value="ECO:0007669"/>
    <property type="project" value="UniProtKB-KW"/>
</dbReference>
<dbReference type="CDD" id="cd10224">
    <property type="entry name" value="ASKHA_NBD_actin"/>
    <property type="match status" value="1"/>
</dbReference>
<dbReference type="FunFam" id="2.30.36.70:FF:000001">
    <property type="entry name" value="Actin, alpha skeletal muscle"/>
    <property type="match status" value="1"/>
</dbReference>
<dbReference type="FunFam" id="3.30.420.40:FF:000131">
    <property type="entry name" value="Actin, alpha skeletal muscle"/>
    <property type="match status" value="1"/>
</dbReference>
<dbReference type="FunFam" id="3.30.420.40:FF:000291">
    <property type="entry name" value="Actin, alpha skeletal muscle"/>
    <property type="match status" value="1"/>
</dbReference>
<dbReference type="FunFam" id="3.90.640.10:FF:000047">
    <property type="entry name" value="Actin, alpha skeletal muscle"/>
    <property type="match status" value="1"/>
</dbReference>
<dbReference type="FunFam" id="3.30.420.40:FF:000058">
    <property type="entry name" value="Putative actin-related protein 5"/>
    <property type="match status" value="1"/>
</dbReference>
<dbReference type="Gene3D" id="3.30.420.40">
    <property type="match status" value="2"/>
</dbReference>
<dbReference type="Gene3D" id="3.90.640.10">
    <property type="entry name" value="Actin, Chain A, domain 4"/>
    <property type="match status" value="1"/>
</dbReference>
<dbReference type="InterPro" id="IPR004000">
    <property type="entry name" value="Actin"/>
</dbReference>
<dbReference type="InterPro" id="IPR020902">
    <property type="entry name" value="Actin/actin-like_CS"/>
</dbReference>
<dbReference type="InterPro" id="IPR004001">
    <property type="entry name" value="Actin_CS"/>
</dbReference>
<dbReference type="InterPro" id="IPR043129">
    <property type="entry name" value="ATPase_NBD"/>
</dbReference>
<dbReference type="PANTHER" id="PTHR11937">
    <property type="entry name" value="ACTIN"/>
    <property type="match status" value="1"/>
</dbReference>
<dbReference type="Pfam" id="PF00022">
    <property type="entry name" value="Actin"/>
    <property type="match status" value="1"/>
</dbReference>
<dbReference type="PRINTS" id="PR00190">
    <property type="entry name" value="ACTIN"/>
</dbReference>
<dbReference type="SMART" id="SM00268">
    <property type="entry name" value="ACTIN"/>
    <property type="match status" value="1"/>
</dbReference>
<dbReference type="SUPFAM" id="SSF53067">
    <property type="entry name" value="Actin-like ATPase domain"/>
    <property type="match status" value="2"/>
</dbReference>
<dbReference type="PROSITE" id="PS00406">
    <property type="entry name" value="ACTINS_1"/>
    <property type="match status" value="1"/>
</dbReference>
<dbReference type="PROSITE" id="PS00432">
    <property type="entry name" value="ACTINS_2"/>
    <property type="match status" value="1"/>
</dbReference>
<dbReference type="PROSITE" id="PS01132">
    <property type="entry name" value="ACTINS_ACT_LIKE"/>
    <property type="match status" value="1"/>
</dbReference>
<proteinExistence type="inferred from homology"/>
<name>ACTM_MOLOC</name>
<evidence type="ECO:0000250" key="1">
    <source>
        <dbReference type="UniProtKB" id="P68137"/>
    </source>
</evidence>
<evidence type="ECO:0000305" key="2"/>